<dbReference type="EMBL" id="AL954747">
    <property type="protein sequence ID" value="CAD84116.1"/>
    <property type="molecule type" value="Genomic_DNA"/>
</dbReference>
<dbReference type="RefSeq" id="WP_011110850.1">
    <property type="nucleotide sequence ID" value="NC_004757.1"/>
</dbReference>
<dbReference type="SMR" id="Q82XP9"/>
<dbReference type="STRING" id="228410.NE0205"/>
<dbReference type="GeneID" id="87103412"/>
<dbReference type="KEGG" id="neu:NE0205"/>
<dbReference type="eggNOG" id="COG0224">
    <property type="taxonomic scope" value="Bacteria"/>
</dbReference>
<dbReference type="HOGENOM" id="CLU_050669_0_1_4"/>
<dbReference type="OrthoDB" id="9812769at2"/>
<dbReference type="PhylomeDB" id="Q82XP9"/>
<dbReference type="Proteomes" id="UP000001416">
    <property type="component" value="Chromosome"/>
</dbReference>
<dbReference type="GO" id="GO:0005886">
    <property type="term" value="C:plasma membrane"/>
    <property type="evidence" value="ECO:0007669"/>
    <property type="project" value="UniProtKB-SubCell"/>
</dbReference>
<dbReference type="GO" id="GO:0045259">
    <property type="term" value="C:proton-transporting ATP synthase complex"/>
    <property type="evidence" value="ECO:0007669"/>
    <property type="project" value="UniProtKB-KW"/>
</dbReference>
<dbReference type="GO" id="GO:0005524">
    <property type="term" value="F:ATP binding"/>
    <property type="evidence" value="ECO:0007669"/>
    <property type="project" value="UniProtKB-UniRule"/>
</dbReference>
<dbReference type="GO" id="GO:0046933">
    <property type="term" value="F:proton-transporting ATP synthase activity, rotational mechanism"/>
    <property type="evidence" value="ECO:0007669"/>
    <property type="project" value="UniProtKB-UniRule"/>
</dbReference>
<dbReference type="GO" id="GO:0042777">
    <property type="term" value="P:proton motive force-driven plasma membrane ATP synthesis"/>
    <property type="evidence" value="ECO:0007669"/>
    <property type="project" value="UniProtKB-UniRule"/>
</dbReference>
<dbReference type="CDD" id="cd12151">
    <property type="entry name" value="F1-ATPase_gamma"/>
    <property type="match status" value="1"/>
</dbReference>
<dbReference type="FunFam" id="1.10.287.80:FF:000005">
    <property type="entry name" value="ATP synthase gamma chain"/>
    <property type="match status" value="1"/>
</dbReference>
<dbReference type="FunFam" id="3.40.1380.10:FF:000006">
    <property type="entry name" value="ATP synthase gamma chain"/>
    <property type="match status" value="1"/>
</dbReference>
<dbReference type="Gene3D" id="3.40.1380.10">
    <property type="match status" value="1"/>
</dbReference>
<dbReference type="Gene3D" id="1.10.287.80">
    <property type="entry name" value="ATP synthase, gamma subunit, helix hairpin domain"/>
    <property type="match status" value="2"/>
</dbReference>
<dbReference type="HAMAP" id="MF_00815">
    <property type="entry name" value="ATP_synth_gamma_bact"/>
    <property type="match status" value="1"/>
</dbReference>
<dbReference type="InterPro" id="IPR035968">
    <property type="entry name" value="ATP_synth_F1_ATPase_gsu"/>
</dbReference>
<dbReference type="InterPro" id="IPR000131">
    <property type="entry name" value="ATP_synth_F1_gsu"/>
</dbReference>
<dbReference type="InterPro" id="IPR023632">
    <property type="entry name" value="ATP_synth_F1_gsu_CS"/>
</dbReference>
<dbReference type="NCBIfam" id="TIGR01146">
    <property type="entry name" value="ATPsyn_F1gamma"/>
    <property type="match status" value="1"/>
</dbReference>
<dbReference type="NCBIfam" id="NF004144">
    <property type="entry name" value="PRK05621.1-1"/>
    <property type="match status" value="1"/>
</dbReference>
<dbReference type="PANTHER" id="PTHR11693">
    <property type="entry name" value="ATP SYNTHASE GAMMA CHAIN"/>
    <property type="match status" value="1"/>
</dbReference>
<dbReference type="PANTHER" id="PTHR11693:SF22">
    <property type="entry name" value="ATP SYNTHASE SUBUNIT GAMMA, MITOCHONDRIAL"/>
    <property type="match status" value="1"/>
</dbReference>
<dbReference type="Pfam" id="PF00231">
    <property type="entry name" value="ATP-synt"/>
    <property type="match status" value="1"/>
</dbReference>
<dbReference type="PRINTS" id="PR00126">
    <property type="entry name" value="ATPASEGAMMA"/>
</dbReference>
<dbReference type="SUPFAM" id="SSF52943">
    <property type="entry name" value="ATP synthase (F1-ATPase), gamma subunit"/>
    <property type="match status" value="1"/>
</dbReference>
<dbReference type="PROSITE" id="PS00153">
    <property type="entry name" value="ATPASE_GAMMA"/>
    <property type="match status" value="1"/>
</dbReference>
<keyword id="KW-0066">ATP synthesis</keyword>
<keyword id="KW-0997">Cell inner membrane</keyword>
<keyword id="KW-1003">Cell membrane</keyword>
<keyword id="KW-0139">CF(1)</keyword>
<keyword id="KW-0375">Hydrogen ion transport</keyword>
<keyword id="KW-0406">Ion transport</keyword>
<keyword id="KW-0472">Membrane</keyword>
<keyword id="KW-1185">Reference proteome</keyword>
<keyword id="KW-0813">Transport</keyword>
<name>ATPG_NITEU</name>
<sequence length="294" mass="32747">MPSSREIRNKIKSVKNTQKITRAMEMVAASKMRKAQDRMKKARPYGEKIRNVAAHMSNASVEYRHPFLISRDSVKRVGIIVVTSDKGLCGGLNTNVLRRALNEIRTWETEGNHVDACCIGNKGLGFMSRLGTQVISQVTGLGDAPNMERLIGAVKVVLDAYTEGQLDRVYIFYNRFINTMKQMPVMEQLLPLTDDRISSEDGEARPTRAPWDYIYEPEAKPVIDDIMVRYIEALVYQAVAENMASEQSARMVAMKAASDNAGNLIDELTLIYNKSRQAAITKELSEIVGGAAAV</sequence>
<feature type="chain" id="PRO_0000073330" description="ATP synthase gamma chain">
    <location>
        <begin position="1"/>
        <end position="294"/>
    </location>
</feature>
<comment type="function">
    <text evidence="1">Produces ATP from ADP in the presence of a proton gradient across the membrane. The gamma chain is believed to be important in regulating ATPase activity and the flow of protons through the CF(0) complex.</text>
</comment>
<comment type="subunit">
    <text evidence="1">F-type ATPases have 2 components, CF(1) - the catalytic core - and CF(0) - the membrane proton channel. CF(1) has five subunits: alpha(3), beta(3), gamma(1), delta(1), epsilon(1). CF(0) has three main subunits: a, b and c.</text>
</comment>
<comment type="subcellular location">
    <subcellularLocation>
        <location evidence="1">Cell inner membrane</location>
        <topology evidence="1">Peripheral membrane protein</topology>
    </subcellularLocation>
</comment>
<comment type="similarity">
    <text evidence="1">Belongs to the ATPase gamma chain family.</text>
</comment>
<accession>Q82XP9</accession>
<organism>
    <name type="scientific">Nitrosomonas europaea (strain ATCC 19718 / CIP 103999 / KCTC 2705 / NBRC 14298)</name>
    <dbReference type="NCBI Taxonomy" id="228410"/>
    <lineage>
        <taxon>Bacteria</taxon>
        <taxon>Pseudomonadati</taxon>
        <taxon>Pseudomonadota</taxon>
        <taxon>Betaproteobacteria</taxon>
        <taxon>Nitrosomonadales</taxon>
        <taxon>Nitrosomonadaceae</taxon>
        <taxon>Nitrosomonas</taxon>
    </lineage>
</organism>
<evidence type="ECO:0000255" key="1">
    <source>
        <dbReference type="HAMAP-Rule" id="MF_00815"/>
    </source>
</evidence>
<protein>
    <recommendedName>
        <fullName evidence="1">ATP synthase gamma chain</fullName>
    </recommendedName>
    <alternativeName>
        <fullName evidence="1">ATP synthase F1 sector gamma subunit</fullName>
    </alternativeName>
    <alternativeName>
        <fullName evidence="1">F-ATPase gamma subunit</fullName>
    </alternativeName>
</protein>
<gene>
    <name evidence="1" type="primary">atpG</name>
    <name type="ordered locus">NE0205</name>
</gene>
<reference key="1">
    <citation type="journal article" date="2003" name="J. Bacteriol.">
        <title>Complete genome sequence of the ammonia-oxidizing bacterium and obligate chemolithoautotroph Nitrosomonas europaea.</title>
        <authorList>
            <person name="Chain P."/>
            <person name="Lamerdin J.E."/>
            <person name="Larimer F.W."/>
            <person name="Regala W."/>
            <person name="Lao V."/>
            <person name="Land M.L."/>
            <person name="Hauser L."/>
            <person name="Hooper A.B."/>
            <person name="Klotz M.G."/>
            <person name="Norton J."/>
            <person name="Sayavedra-Soto L.A."/>
            <person name="Arciero D.M."/>
            <person name="Hommes N.G."/>
            <person name="Whittaker M.M."/>
            <person name="Arp D.J."/>
        </authorList>
    </citation>
    <scope>NUCLEOTIDE SEQUENCE [LARGE SCALE GENOMIC DNA]</scope>
    <source>
        <strain>ATCC 19718 / CIP 103999 / KCTC 2705 / NBRC 14298</strain>
    </source>
</reference>
<proteinExistence type="inferred from homology"/>